<accession>P85823</accession>
<reference evidence="5" key="1">
    <citation type="journal article" date="2009" name="Proteomics">
        <title>The neuropeptidome of Rhodnius prolixus brain.</title>
        <authorList>
            <person name="Ons S."/>
            <person name="Richter F."/>
            <person name="Urlaub H."/>
            <person name="Pomar R.R."/>
        </authorList>
    </citation>
    <scope>PROTEIN SEQUENCE</scope>
    <scope>MASS SPECTROMETRY</scope>
    <scope>AMIDATION AT LEU-8</scope>
    <source>
        <tissue evidence="3">Brain</tissue>
    </source>
</reference>
<feature type="peptide" id="PRO_0000365744" description="Allatostatin-2" evidence="3">
    <location>
        <begin position="1"/>
        <end position="8"/>
    </location>
</feature>
<feature type="modified residue" description="Leucine amide" evidence="3">
    <location>
        <position position="8"/>
    </location>
</feature>
<feature type="unsure residue" description="L or I" evidence="3">
    <location>
        <position position="8"/>
    </location>
</feature>
<keyword id="KW-0027">Amidation</keyword>
<keyword id="KW-0903">Direct protein sequencing</keyword>
<keyword id="KW-0527">Neuropeptide</keyword>
<keyword id="KW-1185">Reference proteome</keyword>
<keyword id="KW-0964">Secreted</keyword>
<evidence type="ECO:0000250" key="1">
    <source>
        <dbReference type="UniProtKB" id="P41840"/>
    </source>
</evidence>
<evidence type="ECO:0000255" key="2"/>
<evidence type="ECO:0000269" key="3">
    <source>
    </source>
</evidence>
<evidence type="ECO:0000303" key="4">
    <source>
    </source>
</evidence>
<evidence type="ECO:0000305" key="5"/>
<name>ALL2_RHOPR</name>
<comment type="function">
    <text evidence="1">May act as a neurotransmitter or neuromodulator.</text>
</comment>
<comment type="subcellular location">
    <subcellularLocation>
        <location evidence="5">Secreted</location>
    </subcellularLocation>
</comment>
<comment type="PTM">
    <text evidence="3">Position 8 could be leucine amide or isoleucine amide.</text>
</comment>
<comment type="mass spectrometry"/>
<comment type="similarity">
    <text evidence="2">Belongs to the allatostatin family.</text>
</comment>
<protein>
    <recommendedName>
        <fullName evidence="4">Allatostatin-2</fullName>
        <shortName evidence="4">Rhopr-AST-2</shortName>
    </recommendedName>
</protein>
<dbReference type="InParanoid" id="P85823"/>
<dbReference type="Proteomes" id="UP000015103">
    <property type="component" value="Unassembled WGS sequence"/>
</dbReference>
<dbReference type="GO" id="GO:0005576">
    <property type="term" value="C:extracellular region"/>
    <property type="evidence" value="ECO:0007669"/>
    <property type="project" value="UniProtKB-SubCell"/>
</dbReference>
<dbReference type="GO" id="GO:0007218">
    <property type="term" value="P:neuropeptide signaling pathway"/>
    <property type="evidence" value="ECO:0007669"/>
    <property type="project" value="UniProtKB-KW"/>
</dbReference>
<sequence>MRNYSFGL</sequence>
<proteinExistence type="evidence at protein level"/>
<organism>
    <name type="scientific">Rhodnius prolixus</name>
    <name type="common">Triatomid bug</name>
    <dbReference type="NCBI Taxonomy" id="13249"/>
    <lineage>
        <taxon>Eukaryota</taxon>
        <taxon>Metazoa</taxon>
        <taxon>Ecdysozoa</taxon>
        <taxon>Arthropoda</taxon>
        <taxon>Hexapoda</taxon>
        <taxon>Insecta</taxon>
        <taxon>Pterygota</taxon>
        <taxon>Neoptera</taxon>
        <taxon>Paraneoptera</taxon>
        <taxon>Hemiptera</taxon>
        <taxon>Heteroptera</taxon>
        <taxon>Panheteroptera</taxon>
        <taxon>Cimicomorpha</taxon>
        <taxon>Reduviidae</taxon>
        <taxon>Triatominae</taxon>
        <taxon>Rhodnius</taxon>
    </lineage>
</organism>